<accession>Q2SWD3</accession>
<evidence type="ECO:0000255" key="1">
    <source>
        <dbReference type="HAMAP-Rule" id="MF_00011"/>
    </source>
</evidence>
<evidence type="ECO:0007829" key="2">
    <source>
        <dbReference type="PDB" id="3UE9"/>
    </source>
</evidence>
<dbReference type="EC" id="6.3.4.4" evidence="1"/>
<dbReference type="EMBL" id="CP000086">
    <property type="protein sequence ID" value="ABC37654.1"/>
    <property type="molecule type" value="Genomic_DNA"/>
</dbReference>
<dbReference type="RefSeq" id="WP_011402304.1">
    <property type="nucleotide sequence ID" value="NZ_CP008785.1"/>
</dbReference>
<dbReference type="PDB" id="3UE9">
    <property type="method" value="X-ray"/>
    <property type="resolution" value="1.95 A"/>
    <property type="chains" value="A/B/C/D=1-448"/>
</dbReference>
<dbReference type="PDBsum" id="3UE9"/>
<dbReference type="SMR" id="Q2SWD3"/>
<dbReference type="GeneID" id="45121963"/>
<dbReference type="KEGG" id="bte:BTH_I2245"/>
<dbReference type="HOGENOM" id="CLU_029848_0_0_4"/>
<dbReference type="UniPathway" id="UPA00075">
    <property type="reaction ID" value="UER00335"/>
</dbReference>
<dbReference type="EvolutionaryTrace" id="Q2SWD3"/>
<dbReference type="Proteomes" id="UP000001930">
    <property type="component" value="Chromosome I"/>
</dbReference>
<dbReference type="GO" id="GO:0005737">
    <property type="term" value="C:cytoplasm"/>
    <property type="evidence" value="ECO:0007669"/>
    <property type="project" value="UniProtKB-SubCell"/>
</dbReference>
<dbReference type="GO" id="GO:0004019">
    <property type="term" value="F:adenylosuccinate synthase activity"/>
    <property type="evidence" value="ECO:0007669"/>
    <property type="project" value="UniProtKB-UniRule"/>
</dbReference>
<dbReference type="GO" id="GO:0005525">
    <property type="term" value="F:GTP binding"/>
    <property type="evidence" value="ECO:0007669"/>
    <property type="project" value="UniProtKB-UniRule"/>
</dbReference>
<dbReference type="GO" id="GO:0000287">
    <property type="term" value="F:magnesium ion binding"/>
    <property type="evidence" value="ECO:0007669"/>
    <property type="project" value="UniProtKB-UniRule"/>
</dbReference>
<dbReference type="GO" id="GO:0044208">
    <property type="term" value="P:'de novo' AMP biosynthetic process"/>
    <property type="evidence" value="ECO:0007669"/>
    <property type="project" value="UniProtKB-UniRule"/>
</dbReference>
<dbReference type="GO" id="GO:0046040">
    <property type="term" value="P:IMP metabolic process"/>
    <property type="evidence" value="ECO:0007669"/>
    <property type="project" value="TreeGrafter"/>
</dbReference>
<dbReference type="CDD" id="cd03108">
    <property type="entry name" value="AdSS"/>
    <property type="match status" value="1"/>
</dbReference>
<dbReference type="FunFam" id="1.10.300.10:FF:000001">
    <property type="entry name" value="Adenylosuccinate synthetase"/>
    <property type="match status" value="1"/>
</dbReference>
<dbReference type="FunFam" id="3.90.170.10:FF:000001">
    <property type="entry name" value="Adenylosuccinate synthetase"/>
    <property type="match status" value="1"/>
</dbReference>
<dbReference type="Gene3D" id="3.40.440.10">
    <property type="entry name" value="Adenylosuccinate Synthetase, subunit A, domain 1"/>
    <property type="match status" value="1"/>
</dbReference>
<dbReference type="Gene3D" id="1.10.300.10">
    <property type="entry name" value="Adenylosuccinate Synthetase, subunit A, domain 2"/>
    <property type="match status" value="1"/>
</dbReference>
<dbReference type="Gene3D" id="3.90.170.10">
    <property type="entry name" value="Adenylosuccinate Synthetase, subunit A, domain 3"/>
    <property type="match status" value="1"/>
</dbReference>
<dbReference type="HAMAP" id="MF_00011">
    <property type="entry name" value="Adenylosucc_synth"/>
    <property type="match status" value="1"/>
</dbReference>
<dbReference type="InterPro" id="IPR018220">
    <property type="entry name" value="Adenylosuccin_syn_GTP-bd"/>
</dbReference>
<dbReference type="InterPro" id="IPR033128">
    <property type="entry name" value="Adenylosuccin_syn_Lys_AS"/>
</dbReference>
<dbReference type="InterPro" id="IPR042109">
    <property type="entry name" value="Adenylosuccinate_synth_dom1"/>
</dbReference>
<dbReference type="InterPro" id="IPR042110">
    <property type="entry name" value="Adenylosuccinate_synth_dom2"/>
</dbReference>
<dbReference type="InterPro" id="IPR042111">
    <property type="entry name" value="Adenylosuccinate_synth_dom3"/>
</dbReference>
<dbReference type="InterPro" id="IPR001114">
    <property type="entry name" value="Adenylosuccinate_synthetase"/>
</dbReference>
<dbReference type="InterPro" id="IPR027417">
    <property type="entry name" value="P-loop_NTPase"/>
</dbReference>
<dbReference type="NCBIfam" id="NF002223">
    <property type="entry name" value="PRK01117.1"/>
    <property type="match status" value="1"/>
</dbReference>
<dbReference type="NCBIfam" id="TIGR00184">
    <property type="entry name" value="purA"/>
    <property type="match status" value="1"/>
</dbReference>
<dbReference type="PANTHER" id="PTHR11846">
    <property type="entry name" value="ADENYLOSUCCINATE SYNTHETASE"/>
    <property type="match status" value="1"/>
</dbReference>
<dbReference type="PANTHER" id="PTHR11846:SF0">
    <property type="entry name" value="ADENYLOSUCCINATE SYNTHETASE"/>
    <property type="match status" value="1"/>
</dbReference>
<dbReference type="Pfam" id="PF00709">
    <property type="entry name" value="Adenylsucc_synt"/>
    <property type="match status" value="1"/>
</dbReference>
<dbReference type="SMART" id="SM00788">
    <property type="entry name" value="Adenylsucc_synt"/>
    <property type="match status" value="1"/>
</dbReference>
<dbReference type="SUPFAM" id="SSF52540">
    <property type="entry name" value="P-loop containing nucleoside triphosphate hydrolases"/>
    <property type="match status" value="1"/>
</dbReference>
<dbReference type="PROSITE" id="PS01266">
    <property type="entry name" value="ADENYLOSUCCIN_SYN_1"/>
    <property type="match status" value="1"/>
</dbReference>
<dbReference type="PROSITE" id="PS00513">
    <property type="entry name" value="ADENYLOSUCCIN_SYN_2"/>
    <property type="match status" value="1"/>
</dbReference>
<feature type="chain" id="PRO_1000000791" description="Adenylosuccinate synthetase">
    <location>
        <begin position="1"/>
        <end position="448"/>
    </location>
</feature>
<feature type="active site" description="Proton acceptor" evidence="1">
    <location>
        <position position="23"/>
    </location>
</feature>
<feature type="active site" description="Proton donor" evidence="1">
    <location>
        <position position="51"/>
    </location>
</feature>
<feature type="binding site" evidence="1">
    <location>
        <begin position="22"/>
        <end position="28"/>
    </location>
    <ligand>
        <name>GTP</name>
        <dbReference type="ChEBI" id="CHEBI:37565"/>
    </ligand>
</feature>
<feature type="binding site" description="in other chain" evidence="1">
    <location>
        <begin position="23"/>
        <end position="26"/>
    </location>
    <ligand>
        <name>IMP</name>
        <dbReference type="ChEBI" id="CHEBI:58053"/>
        <note>ligand shared between dimeric partners</note>
    </ligand>
</feature>
<feature type="binding site" evidence="1">
    <location>
        <position position="23"/>
    </location>
    <ligand>
        <name>Mg(2+)</name>
        <dbReference type="ChEBI" id="CHEBI:18420"/>
    </ligand>
</feature>
<feature type="binding site" description="in other chain" evidence="1">
    <location>
        <begin position="48"/>
        <end position="51"/>
    </location>
    <ligand>
        <name>IMP</name>
        <dbReference type="ChEBI" id="CHEBI:58053"/>
        <note>ligand shared between dimeric partners</note>
    </ligand>
</feature>
<feature type="binding site" evidence="1">
    <location>
        <begin position="50"/>
        <end position="52"/>
    </location>
    <ligand>
        <name>GTP</name>
        <dbReference type="ChEBI" id="CHEBI:37565"/>
    </ligand>
</feature>
<feature type="binding site" evidence="1">
    <location>
        <position position="50"/>
    </location>
    <ligand>
        <name>Mg(2+)</name>
        <dbReference type="ChEBI" id="CHEBI:18420"/>
    </ligand>
</feature>
<feature type="binding site" description="in other chain" evidence="1">
    <location>
        <position position="139"/>
    </location>
    <ligand>
        <name>IMP</name>
        <dbReference type="ChEBI" id="CHEBI:58053"/>
        <note>ligand shared between dimeric partners</note>
    </ligand>
</feature>
<feature type="binding site" evidence="1">
    <location>
        <position position="153"/>
    </location>
    <ligand>
        <name>IMP</name>
        <dbReference type="ChEBI" id="CHEBI:58053"/>
        <note>ligand shared between dimeric partners</note>
    </ligand>
</feature>
<feature type="binding site" description="in other chain" evidence="1">
    <location>
        <position position="234"/>
    </location>
    <ligand>
        <name>IMP</name>
        <dbReference type="ChEBI" id="CHEBI:58053"/>
        <note>ligand shared between dimeric partners</note>
    </ligand>
</feature>
<feature type="binding site" description="in other chain" evidence="1">
    <location>
        <position position="249"/>
    </location>
    <ligand>
        <name>IMP</name>
        <dbReference type="ChEBI" id="CHEBI:58053"/>
        <note>ligand shared between dimeric partners</note>
    </ligand>
</feature>
<feature type="binding site" evidence="1">
    <location>
        <begin position="317"/>
        <end position="323"/>
    </location>
    <ligand>
        <name>substrate</name>
    </ligand>
</feature>
<feature type="binding site" description="in other chain" evidence="1">
    <location>
        <position position="321"/>
    </location>
    <ligand>
        <name>IMP</name>
        <dbReference type="ChEBI" id="CHEBI:58053"/>
        <note>ligand shared between dimeric partners</note>
    </ligand>
</feature>
<feature type="binding site" evidence="1">
    <location>
        <position position="323"/>
    </location>
    <ligand>
        <name>GTP</name>
        <dbReference type="ChEBI" id="CHEBI:37565"/>
    </ligand>
</feature>
<feature type="binding site" evidence="1">
    <location>
        <begin position="349"/>
        <end position="351"/>
    </location>
    <ligand>
        <name>GTP</name>
        <dbReference type="ChEBI" id="CHEBI:37565"/>
    </ligand>
</feature>
<feature type="binding site" evidence="1">
    <location>
        <begin position="431"/>
        <end position="433"/>
    </location>
    <ligand>
        <name>GTP</name>
        <dbReference type="ChEBI" id="CHEBI:37565"/>
    </ligand>
</feature>
<feature type="strand" evidence="2">
    <location>
        <begin position="14"/>
        <end position="22"/>
    </location>
</feature>
<feature type="helix" evidence="2">
    <location>
        <begin position="26"/>
        <end position="34"/>
    </location>
</feature>
<feature type="strand" evidence="2">
    <location>
        <begin position="38"/>
        <end position="42"/>
    </location>
</feature>
<feature type="strand" evidence="2">
    <location>
        <begin position="63"/>
        <end position="65"/>
    </location>
</feature>
<feature type="helix" evidence="2">
    <location>
        <begin position="67"/>
        <end position="70"/>
    </location>
</feature>
<feature type="strand" evidence="2">
    <location>
        <begin position="75"/>
        <end position="78"/>
    </location>
</feature>
<feature type="strand" evidence="2">
    <location>
        <begin position="82"/>
        <end position="84"/>
    </location>
</feature>
<feature type="helix" evidence="2">
    <location>
        <begin position="86"/>
        <end position="98"/>
    </location>
</feature>
<feature type="helix" evidence="2">
    <location>
        <begin position="104"/>
        <end position="106"/>
    </location>
</feature>
<feature type="strand" evidence="2">
    <location>
        <begin position="107"/>
        <end position="110"/>
    </location>
</feature>
<feature type="helix" evidence="2">
    <location>
        <begin position="118"/>
        <end position="129"/>
    </location>
</feature>
<feature type="helix" evidence="2">
    <location>
        <begin position="143"/>
        <end position="151"/>
    </location>
</feature>
<feature type="helix" evidence="2">
    <location>
        <begin position="158"/>
        <end position="162"/>
    </location>
</feature>
<feature type="helix" evidence="2">
    <location>
        <begin position="164"/>
        <end position="184"/>
    </location>
</feature>
<feature type="helix" evidence="2">
    <location>
        <begin position="193"/>
        <end position="201"/>
    </location>
</feature>
<feature type="helix" evidence="2">
    <location>
        <begin position="204"/>
        <end position="207"/>
    </location>
</feature>
<feature type="helix" evidence="2">
    <location>
        <begin position="208"/>
        <end position="210"/>
    </location>
</feature>
<feature type="helix" evidence="2">
    <location>
        <begin position="214"/>
        <end position="223"/>
    </location>
</feature>
<feature type="strand" evidence="2">
    <location>
        <begin position="228"/>
        <end position="231"/>
    </location>
</feature>
<feature type="helix" evidence="2">
    <location>
        <begin position="236"/>
        <end position="238"/>
    </location>
</feature>
<feature type="turn" evidence="2">
    <location>
        <begin position="240"/>
        <end position="242"/>
    </location>
</feature>
<feature type="helix" evidence="2">
    <location>
        <begin position="257"/>
        <end position="262"/>
    </location>
</feature>
<feature type="helix" evidence="2">
    <location>
        <begin position="266"/>
        <end position="268"/>
    </location>
</feature>
<feature type="strand" evidence="2">
    <location>
        <begin position="271"/>
        <end position="282"/>
    </location>
</feature>
<feature type="strand" evidence="2">
    <location>
        <begin position="284"/>
        <end position="286"/>
    </location>
</feature>
<feature type="strand" evidence="2">
    <location>
        <begin position="291"/>
        <end position="293"/>
    </location>
</feature>
<feature type="helix" evidence="2">
    <location>
        <begin position="303"/>
        <end position="311"/>
    </location>
</feature>
<feature type="turn" evidence="2">
    <location>
        <begin position="317"/>
        <end position="319"/>
    </location>
</feature>
<feature type="strand" evidence="2">
    <location>
        <begin position="324"/>
        <end position="329"/>
    </location>
</feature>
<feature type="helix" evidence="2">
    <location>
        <begin position="330"/>
        <end position="340"/>
    </location>
</feature>
<feature type="strand" evidence="2">
    <location>
        <begin position="344"/>
        <end position="348"/>
    </location>
</feature>
<feature type="helix" evidence="2">
    <location>
        <begin position="350"/>
        <end position="353"/>
    </location>
</feature>
<feature type="strand" evidence="2">
    <location>
        <begin position="357"/>
        <end position="367"/>
    </location>
</feature>
<feature type="strand" evidence="2">
    <location>
        <begin position="370"/>
        <end position="372"/>
    </location>
</feature>
<feature type="helix" evidence="2">
    <location>
        <begin position="379"/>
        <end position="384"/>
    </location>
</feature>
<feature type="strand" evidence="2">
    <location>
        <begin position="386"/>
        <end position="393"/>
    </location>
</feature>
<feature type="helix" evidence="2">
    <location>
        <begin position="405"/>
        <end position="407"/>
    </location>
</feature>
<feature type="helix" evidence="2">
    <location>
        <begin position="410"/>
        <end position="423"/>
    </location>
</feature>
<feature type="strand" evidence="2">
    <location>
        <begin position="427"/>
        <end position="431"/>
    </location>
</feature>
<feature type="strand" evidence="2">
    <location>
        <begin position="433"/>
        <end position="435"/>
    </location>
</feature>
<feature type="strand" evidence="2">
    <location>
        <begin position="438"/>
        <end position="443"/>
    </location>
</feature>
<gene>
    <name evidence="1" type="primary">purA</name>
    <name type="ordered locus">BTH_I2245</name>
</gene>
<sequence length="448" mass="48285">MSASAVNVTPGRNVVVVGTQWGDEGKGKIVDWLTDHAQGVVRFQGGHNAGHTLIIGGKKTILRLIPSGIMREGVACYIGNGVVLSPEALFKEIGELEEAGLSVRERLFISEATTLILPYHIAIDQAREARKGAGKIGTTGRGIGPAYEDKVGRRALRVQDLFDARTFADRLRENLDFHNFVLTQYLGGAAVDFQATLDTMLGYADRLRPMVADVSRRLYEENHAGRNLLFEGAQGTLLDIDHGTYPFVTSSNCVAGAAAAGAGVGPQKLNYILGITKAYCTRVGSGPFPSELYDADNPSRQDQIGITLANVGKEFGSVTGRPRRTGWLDAAALRRSIQINGVSGLCMTKLDVLDGLDEVKLCVGYKIDGEDADLLPRGAAEVARCEPVYETFGGWKESTVGINSWDALPANARAYLTRVQEVAGVPIDMVSTGPDRDETILLRHPFKV</sequence>
<reference key="1">
    <citation type="journal article" date="2005" name="BMC Genomics">
        <title>Bacterial genome adaptation to niches: divergence of the potential virulence genes in three Burkholderia species of different survival strategies.</title>
        <authorList>
            <person name="Kim H.S."/>
            <person name="Schell M.A."/>
            <person name="Yu Y."/>
            <person name="Ulrich R.L."/>
            <person name="Sarria S.H."/>
            <person name="Nierman W.C."/>
            <person name="DeShazer D."/>
        </authorList>
    </citation>
    <scope>NUCLEOTIDE SEQUENCE [LARGE SCALE GENOMIC DNA]</scope>
    <source>
        <strain>ATCC 700388 / DSM 13276 / CCUG 48851 / CIP 106301 / E264</strain>
    </source>
</reference>
<keyword id="KW-0002">3D-structure</keyword>
<keyword id="KW-0963">Cytoplasm</keyword>
<keyword id="KW-0342">GTP-binding</keyword>
<keyword id="KW-0436">Ligase</keyword>
<keyword id="KW-0460">Magnesium</keyword>
<keyword id="KW-0479">Metal-binding</keyword>
<keyword id="KW-0547">Nucleotide-binding</keyword>
<keyword id="KW-0658">Purine biosynthesis</keyword>
<organism>
    <name type="scientific">Burkholderia thailandensis (strain ATCC 700388 / DSM 13276 / CCUG 48851 / CIP 106301 / E264)</name>
    <dbReference type="NCBI Taxonomy" id="271848"/>
    <lineage>
        <taxon>Bacteria</taxon>
        <taxon>Pseudomonadati</taxon>
        <taxon>Pseudomonadota</taxon>
        <taxon>Betaproteobacteria</taxon>
        <taxon>Burkholderiales</taxon>
        <taxon>Burkholderiaceae</taxon>
        <taxon>Burkholderia</taxon>
        <taxon>pseudomallei group</taxon>
    </lineage>
</organism>
<name>PURA_BURTA</name>
<proteinExistence type="evidence at protein level"/>
<protein>
    <recommendedName>
        <fullName evidence="1">Adenylosuccinate synthetase</fullName>
        <shortName evidence="1">AMPSase</shortName>
        <shortName evidence="1">AdSS</shortName>
        <ecNumber evidence="1">6.3.4.4</ecNumber>
    </recommendedName>
    <alternativeName>
        <fullName evidence="1">IMP--aspartate ligase</fullName>
    </alternativeName>
</protein>
<comment type="function">
    <text evidence="1">Plays an important role in the de novo pathway of purine nucleotide biosynthesis. Catalyzes the first committed step in the biosynthesis of AMP from IMP.</text>
</comment>
<comment type="catalytic activity">
    <reaction evidence="1">
        <text>IMP + L-aspartate + GTP = N(6)-(1,2-dicarboxyethyl)-AMP + GDP + phosphate + 2 H(+)</text>
        <dbReference type="Rhea" id="RHEA:15753"/>
        <dbReference type="ChEBI" id="CHEBI:15378"/>
        <dbReference type="ChEBI" id="CHEBI:29991"/>
        <dbReference type="ChEBI" id="CHEBI:37565"/>
        <dbReference type="ChEBI" id="CHEBI:43474"/>
        <dbReference type="ChEBI" id="CHEBI:57567"/>
        <dbReference type="ChEBI" id="CHEBI:58053"/>
        <dbReference type="ChEBI" id="CHEBI:58189"/>
        <dbReference type="EC" id="6.3.4.4"/>
    </reaction>
</comment>
<comment type="cofactor">
    <cofactor evidence="1">
        <name>Mg(2+)</name>
        <dbReference type="ChEBI" id="CHEBI:18420"/>
    </cofactor>
    <text evidence="1">Binds 1 Mg(2+) ion per subunit.</text>
</comment>
<comment type="pathway">
    <text evidence="1">Purine metabolism; AMP biosynthesis via de novo pathway; AMP from IMP: step 1/2.</text>
</comment>
<comment type="subunit">
    <text evidence="1">Homodimer.</text>
</comment>
<comment type="subcellular location">
    <subcellularLocation>
        <location evidence="1">Cytoplasm</location>
    </subcellularLocation>
</comment>
<comment type="similarity">
    <text evidence="1">Belongs to the adenylosuccinate synthetase family.</text>
</comment>